<gene>
    <name type="primary">scoA</name>
    <name type="ordered locus">MT2579</name>
</gene>
<proteinExistence type="inferred from homology"/>
<accession>P9WPW4</accession>
<accession>L0TCJ8</accession>
<accession>O06167</accession>
<accession>P63648</accession>
<organism>
    <name type="scientific">Mycobacterium tuberculosis (strain CDC 1551 / Oshkosh)</name>
    <dbReference type="NCBI Taxonomy" id="83331"/>
    <lineage>
        <taxon>Bacteria</taxon>
        <taxon>Bacillati</taxon>
        <taxon>Actinomycetota</taxon>
        <taxon>Actinomycetes</taxon>
        <taxon>Mycobacteriales</taxon>
        <taxon>Mycobacteriaceae</taxon>
        <taxon>Mycobacterium</taxon>
        <taxon>Mycobacterium tuberculosis complex</taxon>
    </lineage>
</organism>
<keyword id="KW-1185">Reference proteome</keyword>
<keyword id="KW-0808">Transferase</keyword>
<comment type="catalytic activity">
    <reaction>
        <text>a 3-oxo acid + succinyl-CoA = a 3-oxoacyl-CoA + succinate</text>
        <dbReference type="Rhea" id="RHEA:24564"/>
        <dbReference type="ChEBI" id="CHEBI:30031"/>
        <dbReference type="ChEBI" id="CHEBI:35973"/>
        <dbReference type="ChEBI" id="CHEBI:57292"/>
        <dbReference type="ChEBI" id="CHEBI:90726"/>
        <dbReference type="EC" id="2.8.3.5"/>
    </reaction>
</comment>
<comment type="subunit">
    <text evidence="1">Heterodimer of a subunit A and a subunit B.</text>
</comment>
<comment type="similarity">
    <text evidence="3">Belongs to the 3-oxoacid CoA-transferase subunit A family.</text>
</comment>
<reference key="1">
    <citation type="journal article" date="2002" name="J. Bacteriol.">
        <title>Whole-genome comparison of Mycobacterium tuberculosis clinical and laboratory strains.</title>
        <authorList>
            <person name="Fleischmann R.D."/>
            <person name="Alland D."/>
            <person name="Eisen J.A."/>
            <person name="Carpenter L."/>
            <person name="White O."/>
            <person name="Peterson J.D."/>
            <person name="DeBoy R.T."/>
            <person name="Dodson R.J."/>
            <person name="Gwinn M.L."/>
            <person name="Haft D.H."/>
            <person name="Hickey E.K."/>
            <person name="Kolonay J.F."/>
            <person name="Nelson W.C."/>
            <person name="Umayam L.A."/>
            <person name="Ermolaeva M.D."/>
            <person name="Salzberg S.L."/>
            <person name="Delcher A."/>
            <person name="Utterback T.R."/>
            <person name="Weidman J.F."/>
            <person name="Khouri H.M."/>
            <person name="Gill J."/>
            <person name="Mikula A."/>
            <person name="Bishai W."/>
            <person name="Jacobs W.R. Jr."/>
            <person name="Venter J.C."/>
            <person name="Fraser C.M."/>
        </authorList>
    </citation>
    <scope>NUCLEOTIDE SEQUENCE [LARGE SCALE GENOMIC DNA]</scope>
    <source>
        <strain>CDC 1551 / Oshkosh</strain>
    </source>
</reference>
<feature type="chain" id="PRO_0000426881" description="Probable succinyl-CoA:3-ketoacid coenzyme A transferase subunit A">
    <location>
        <begin position="1"/>
        <end position="248"/>
    </location>
</feature>
<feature type="binding site" evidence="2">
    <location>
        <begin position="24"/>
        <end position="30"/>
    </location>
    <ligand>
        <name>CoA</name>
        <dbReference type="ChEBI" id="CHEBI:57287"/>
    </ligand>
</feature>
<sequence length="248" mass="26276">MDKVVATAAEAVADIANGSSLAVGGFGLCGIPEALIAALVDSGVTDLETVSNNCGIDGVGLGLLLQHKRIRRTVSSYVGENKEFARQFLAGELEVELTPQGTLAERLRAGGMGIPAFYTPAGVGTQVADGGLPWRYDASGGVAVVSPAKETREFDGVTYVLERGIRTDFALVHAWQGDRHGNLMYRHAAANFNPECASAGRITIAEVEHLVEPGEIDPATVHTPGVFVHRVVHVPNPAKKIERETVRQ</sequence>
<name>SCOA_MYCTO</name>
<protein>
    <recommendedName>
        <fullName>Probable succinyl-CoA:3-ketoacid coenzyme A transferase subunit A</fullName>
        <ecNumber>2.8.3.5</ecNumber>
    </recommendedName>
    <alternativeName>
        <fullName>Succinyl-CoA:3-oxoacid CoA-transferase</fullName>
        <shortName>OXCT A</shortName>
    </alternativeName>
</protein>
<evidence type="ECO:0000250" key="1"/>
<evidence type="ECO:0000255" key="2"/>
<evidence type="ECO:0000305" key="3"/>
<dbReference type="EC" id="2.8.3.5"/>
<dbReference type="EMBL" id="AE000516">
    <property type="protein sequence ID" value="AAK46883.1"/>
    <property type="molecule type" value="Genomic_DNA"/>
</dbReference>
<dbReference type="PIR" id="H70550">
    <property type="entry name" value="H70550"/>
</dbReference>
<dbReference type="RefSeq" id="WP_003412786.1">
    <property type="nucleotide sequence ID" value="NZ_KK341227.1"/>
</dbReference>
<dbReference type="SMR" id="P9WPW4"/>
<dbReference type="KEGG" id="mtc:MT2579"/>
<dbReference type="PATRIC" id="fig|83331.31.peg.2781"/>
<dbReference type="HOGENOM" id="CLU_019942_2_0_11"/>
<dbReference type="Proteomes" id="UP000001020">
    <property type="component" value="Chromosome"/>
</dbReference>
<dbReference type="GO" id="GO:0008260">
    <property type="term" value="F:succinyl-CoA:3-oxo-acid CoA-transferase activity"/>
    <property type="evidence" value="ECO:0007669"/>
    <property type="project" value="UniProtKB-EC"/>
</dbReference>
<dbReference type="Gene3D" id="3.40.1080.10">
    <property type="entry name" value="Glutaconate Coenzyme A-transferase"/>
    <property type="match status" value="1"/>
</dbReference>
<dbReference type="InterPro" id="IPR012792">
    <property type="entry name" value="3-oxoacid_CoA-transf_A"/>
</dbReference>
<dbReference type="InterPro" id="IPR004165">
    <property type="entry name" value="CoA_trans_fam_I"/>
</dbReference>
<dbReference type="InterPro" id="IPR004163">
    <property type="entry name" value="CoA_transf_BS"/>
</dbReference>
<dbReference type="InterPro" id="IPR037171">
    <property type="entry name" value="NagB/RpiA_transferase-like"/>
</dbReference>
<dbReference type="NCBIfam" id="TIGR02429">
    <property type="entry name" value="pcaI_scoA_fam"/>
    <property type="match status" value="1"/>
</dbReference>
<dbReference type="PANTHER" id="PTHR13707:SF60">
    <property type="entry name" value="ACETATE COA-TRANSFERASE SUBUNIT ALPHA"/>
    <property type="match status" value="1"/>
</dbReference>
<dbReference type="PANTHER" id="PTHR13707">
    <property type="entry name" value="KETOACID-COENZYME A TRANSFERASE"/>
    <property type="match status" value="1"/>
</dbReference>
<dbReference type="Pfam" id="PF01144">
    <property type="entry name" value="CoA_trans"/>
    <property type="match status" value="1"/>
</dbReference>
<dbReference type="SMART" id="SM00882">
    <property type="entry name" value="CoA_trans"/>
    <property type="match status" value="1"/>
</dbReference>
<dbReference type="SUPFAM" id="SSF100950">
    <property type="entry name" value="NagB/RpiA/CoA transferase-like"/>
    <property type="match status" value="1"/>
</dbReference>
<dbReference type="PROSITE" id="PS01273">
    <property type="entry name" value="COA_TRANSF_1"/>
    <property type="match status" value="1"/>
</dbReference>